<protein>
    <recommendedName>
        <fullName evidence="13">Peptide tarsal-less 3A</fullName>
    </recommendedName>
    <alternativeName>
        <fullName evidence="12">Peptide polished rice 3</fullName>
    </alternativeName>
</protein>
<comment type="function">
    <text evidence="1 2 3 4 5 6 7 8">One of four peptides (tal-1A, tal-2A, tal-3A and tal-AA) produced from a polycistronic gene that function redundantly in several developmental processes (PubMed:17439302, PubMed:17486114, PubMed:21527259, PubMed:25344753). Required in early stages of leg development for the intercalation of the tarsal segments during the mid-third instar stage and later for tarsal joint formation (PubMed:17439302, PubMed:18801356, PubMed:21527259). Promotes the post-translational modification of ovo isoform B (svb) into its active form which in turn initiates trichome development and promotes tarsal joint development (PubMed:20647469, PubMed:21527259, PubMed:26383956). This is likely due to recruitment of the E3 ubiquitin-protein ligase Ubr3 to svb for ubiquitination of its N-terminus, converting svb into a transcriptional activator (PubMed:26383956). Also enhances interaction of Ubr3 with Diap1 (PubMed:26383956). Required for correct wing and leg formation through its regulation of several genes including those in the Notch signaling pathway (PubMed:18801356, PubMed:21527259, PubMed:21682860). Essential for denticle formation and may have a role in the developmental timing of trichome differentiation (PubMed:17486114, PubMed:25344753). Essential for the development of taenidial folds in the trachea (PubMed:17486114).</text>
</comment>
<comment type="subcellular location">
    <subcellularLocation>
        <location evidence="8">Cytoplasm</location>
    </subcellularLocation>
    <subcellularLocation>
        <location evidence="8">Nucleus</location>
    </subcellularLocation>
</comment>
<comment type="developmental stage">
    <text evidence="1 3 6 7">At early stages of embryogenesis, the polycistronic RNA is expressed in seven segmentally separated blastoderm stripes and in a cluster of cells in the anterior part of the embryo (PubMed:17439302). By stage 13 to the end of embryo development, it is expressed in the dorsal trunks, posterior spiracles, pharynx, hindgut and the area which forms the denticle belts (PubMed:17439302). In the leg disk, it is expressed in a ring pattern presumed to be developing tarsal region around 80 to 96 hour after egg laying (AEL) and then in the tarsal furrow at the mid-third instar larval stage (PubMed:17439302, PubMed:18801356). Not detected in the tarsal primordium after 100h AEL but is still expressed in a dorsal chordotonal organ of the leg disk (PubMed:17439302). In pupae, expressed broadly throughout the leg disk 0-3 hour after puparium formation (APF) but is not detected in this region 6 hours APF (PubMed:25344753). High expression 4-8 hours APF in the presumptive joints between tarsal segments (PubMed:21682860). In the noctum expressed from 40 to 44 hours APF (PubMed:25344753). In wing disks of third stage larvae, expressed in two anterior stripes and later in the precursors for chemosensory organs (PubMed:21682860). From late third stage instar larvae to early pupal stages, it is also expressed in the wing provein cells that develop into longitudinal veins L2-L5 (PubMed:21682860). In eye disks, expressed in preclusters for presumptive R8 photoreceptors and in a stripe of cells in the posterior region of the disk (PubMed:21682860).</text>
</comment>
<comment type="induction">
    <text evidence="7">Polycistronic RNA up-regulated by ecdysone.</text>
</comment>
<comment type="disruption phenotype">
    <text evidence="1 2">Simultaneous knockout of tal-1A, tal-2A, tal-3A and tal-AA is embryonic lethal (PubMed:17439302, PubMed:17486114). In embryos chitin secretion and formation of the cuticular exoskeleton appears to be normal (PubMed:17439302, PubMed:17486114). However embryos display a loss of denticle belts and dorsal hairs (PubMed:17439302, PubMed:17486114). Segment-specific epidermal sensory organs are present and segments form normally (PubMed:17439302). The cephalopharyngeal skeleton is lost, and the head skeleton and posterior spiracles are deformed (PubMed:17439302). In the developing leg, tarsal constriction occurs but the tarsal fold does not form (PubMed:17439302). The tracheal system is abnormal displaying a loss of network integrity, an irregular tube diameter and the absence of taenidial folds (PubMed:17439302, PubMed:17486114). Cell packing is not affected, but there is no accumulation of F-actin at the sites of denticle differentiation or formation of F-actin bundles during taenidial development and tracheal tube dilation (stages 14 and 16) (PubMed:17486114). Other F-actin based developmental processes such as filopodia formation of tracheal tip cells, dorsal closure, mitosis or tight packing of denticle cells are unaffected (PubMed:17486114). Denticle and tracheal defects can be rescued by ectopic expression of any one of the four tal peptides (tal-1A, tal-2A, tal-3A and tal-AA) (PubMed:17486114).</text>
</comment>
<comment type="miscellaneous">
    <text evidence="1 2">This protein is produced by a polycistronic gene which also produces tal-1A, tal-2A and tal-AA from non-overlapping reading frames (PubMed:17439302, PubMed:17486114). tal-1A and tal-2A produce the same protein from different reading frames (PubMed:17439302, PubMed:17486114).</text>
</comment>
<reference evidence="12" key="1">
    <citation type="journal article" date="2007" name="Nat. Cell Biol.">
        <title>Small peptide regulators of actin-based cell morphogenesis encoded by a polycistronic mRNA.</title>
        <authorList>
            <person name="Kondo T."/>
            <person name="Hashimoto Y."/>
            <person name="Kato K."/>
            <person name="Inagaki S."/>
            <person name="Hayashi S."/>
            <person name="Kageyama Y."/>
        </authorList>
    </citation>
    <scope>NUCLEOTIDE SEQUENCE [MRNA]</scope>
    <scope>FUNCTION</scope>
    <scope>DISRUPTION PHENOTYPE</scope>
</reference>
<reference evidence="10" key="2">
    <citation type="journal article" date="2007" name="PLoS Biol.">
        <title>Peptides encoded by short ORFs control development and define a new eukaryotic gene family.</title>
        <authorList>
            <person name="Galindo M.I."/>
            <person name="Pueyo J.I."/>
            <person name="Fouix S."/>
            <person name="Bishop S.A."/>
            <person name="Couso J.P."/>
        </authorList>
    </citation>
    <scope>NUCLEOTIDE SEQUENCE [MRNA]</scope>
    <scope>FUNCTION</scope>
    <scope>DEVELOPMENTAL STAGE</scope>
    <scope>DISRUPTION PHENOTYPE</scope>
</reference>
<reference evidence="14" key="3">
    <citation type="journal article" date="2000" name="Science">
        <title>The genome sequence of Drosophila melanogaster.</title>
        <authorList>
            <person name="Adams M.D."/>
            <person name="Celniker S.E."/>
            <person name="Holt R.A."/>
            <person name="Evans C.A."/>
            <person name="Gocayne J.D."/>
            <person name="Amanatides P.G."/>
            <person name="Scherer S.E."/>
            <person name="Li P.W."/>
            <person name="Hoskins R.A."/>
            <person name="Galle R.F."/>
            <person name="George R.A."/>
            <person name="Lewis S.E."/>
            <person name="Richards S."/>
            <person name="Ashburner M."/>
            <person name="Henderson S.N."/>
            <person name="Sutton G.G."/>
            <person name="Wortman J.R."/>
            <person name="Yandell M.D."/>
            <person name="Zhang Q."/>
            <person name="Chen L.X."/>
            <person name="Brandon R.C."/>
            <person name="Rogers Y.-H.C."/>
            <person name="Blazej R.G."/>
            <person name="Champe M."/>
            <person name="Pfeiffer B.D."/>
            <person name="Wan K.H."/>
            <person name="Doyle C."/>
            <person name="Baxter E.G."/>
            <person name="Helt G."/>
            <person name="Nelson C.R."/>
            <person name="Miklos G.L.G."/>
            <person name="Abril J.F."/>
            <person name="Agbayani A."/>
            <person name="An H.-J."/>
            <person name="Andrews-Pfannkoch C."/>
            <person name="Baldwin D."/>
            <person name="Ballew R.M."/>
            <person name="Basu A."/>
            <person name="Baxendale J."/>
            <person name="Bayraktaroglu L."/>
            <person name="Beasley E.M."/>
            <person name="Beeson K.Y."/>
            <person name="Benos P.V."/>
            <person name="Berman B.P."/>
            <person name="Bhandari D."/>
            <person name="Bolshakov S."/>
            <person name="Borkova D."/>
            <person name="Botchan M.R."/>
            <person name="Bouck J."/>
            <person name="Brokstein P."/>
            <person name="Brottier P."/>
            <person name="Burtis K.C."/>
            <person name="Busam D.A."/>
            <person name="Butler H."/>
            <person name="Cadieu E."/>
            <person name="Center A."/>
            <person name="Chandra I."/>
            <person name="Cherry J.M."/>
            <person name="Cawley S."/>
            <person name="Dahlke C."/>
            <person name="Davenport L.B."/>
            <person name="Davies P."/>
            <person name="de Pablos B."/>
            <person name="Delcher A."/>
            <person name="Deng Z."/>
            <person name="Mays A.D."/>
            <person name="Dew I."/>
            <person name="Dietz S.M."/>
            <person name="Dodson K."/>
            <person name="Doup L.E."/>
            <person name="Downes M."/>
            <person name="Dugan-Rocha S."/>
            <person name="Dunkov B.C."/>
            <person name="Dunn P."/>
            <person name="Durbin K.J."/>
            <person name="Evangelista C.C."/>
            <person name="Ferraz C."/>
            <person name="Ferriera S."/>
            <person name="Fleischmann W."/>
            <person name="Fosler C."/>
            <person name="Gabrielian A.E."/>
            <person name="Garg N.S."/>
            <person name="Gelbart W.M."/>
            <person name="Glasser K."/>
            <person name="Glodek A."/>
            <person name="Gong F."/>
            <person name="Gorrell J.H."/>
            <person name="Gu Z."/>
            <person name="Guan P."/>
            <person name="Harris M."/>
            <person name="Harris N.L."/>
            <person name="Harvey D.A."/>
            <person name="Heiman T.J."/>
            <person name="Hernandez J.R."/>
            <person name="Houck J."/>
            <person name="Hostin D."/>
            <person name="Houston K.A."/>
            <person name="Howland T.J."/>
            <person name="Wei M.-H."/>
            <person name="Ibegwam C."/>
            <person name="Jalali M."/>
            <person name="Kalush F."/>
            <person name="Karpen G.H."/>
            <person name="Ke Z."/>
            <person name="Kennison J.A."/>
            <person name="Ketchum K.A."/>
            <person name="Kimmel B.E."/>
            <person name="Kodira C.D."/>
            <person name="Kraft C.L."/>
            <person name="Kravitz S."/>
            <person name="Kulp D."/>
            <person name="Lai Z."/>
            <person name="Lasko P."/>
            <person name="Lei Y."/>
            <person name="Levitsky A.A."/>
            <person name="Li J.H."/>
            <person name="Li Z."/>
            <person name="Liang Y."/>
            <person name="Lin X."/>
            <person name="Liu X."/>
            <person name="Mattei B."/>
            <person name="McIntosh T.C."/>
            <person name="McLeod M.P."/>
            <person name="McPherson D."/>
            <person name="Merkulov G."/>
            <person name="Milshina N.V."/>
            <person name="Mobarry C."/>
            <person name="Morris J."/>
            <person name="Moshrefi A."/>
            <person name="Mount S.M."/>
            <person name="Moy M."/>
            <person name="Murphy B."/>
            <person name="Murphy L."/>
            <person name="Muzny D.M."/>
            <person name="Nelson D.L."/>
            <person name="Nelson D.R."/>
            <person name="Nelson K.A."/>
            <person name="Nixon K."/>
            <person name="Nusskern D.R."/>
            <person name="Pacleb J.M."/>
            <person name="Palazzolo M."/>
            <person name="Pittman G.S."/>
            <person name="Pan S."/>
            <person name="Pollard J."/>
            <person name="Puri V."/>
            <person name="Reese M.G."/>
            <person name="Reinert K."/>
            <person name="Remington K."/>
            <person name="Saunders R.D.C."/>
            <person name="Scheeler F."/>
            <person name="Shen H."/>
            <person name="Shue B.C."/>
            <person name="Siden-Kiamos I."/>
            <person name="Simpson M."/>
            <person name="Skupski M.P."/>
            <person name="Smith T.J."/>
            <person name="Spier E."/>
            <person name="Spradling A.C."/>
            <person name="Stapleton M."/>
            <person name="Strong R."/>
            <person name="Sun E."/>
            <person name="Svirskas R."/>
            <person name="Tector C."/>
            <person name="Turner R."/>
            <person name="Venter E."/>
            <person name="Wang A.H."/>
            <person name="Wang X."/>
            <person name="Wang Z.-Y."/>
            <person name="Wassarman D.A."/>
            <person name="Weinstock G.M."/>
            <person name="Weissenbach J."/>
            <person name="Williams S.M."/>
            <person name="Woodage T."/>
            <person name="Worley K.C."/>
            <person name="Wu D."/>
            <person name="Yang S."/>
            <person name="Yao Q.A."/>
            <person name="Ye J."/>
            <person name="Yeh R.-F."/>
            <person name="Zaveri J.S."/>
            <person name="Zhan M."/>
            <person name="Zhang G."/>
            <person name="Zhao Q."/>
            <person name="Zheng L."/>
            <person name="Zheng X.H."/>
            <person name="Zhong F.N."/>
            <person name="Zhong W."/>
            <person name="Zhou X."/>
            <person name="Zhu S.C."/>
            <person name="Zhu X."/>
            <person name="Smith H.O."/>
            <person name="Gibbs R.A."/>
            <person name="Myers E.W."/>
            <person name="Rubin G.M."/>
            <person name="Venter J.C."/>
        </authorList>
    </citation>
    <scope>NUCLEOTIDE SEQUENCE [LARGE SCALE GENOMIC DNA]</scope>
    <source>
        <strain evidence="14">Berkeley</strain>
    </source>
</reference>
<reference evidence="14" key="4">
    <citation type="journal article" date="2002" name="Genome Biol.">
        <title>Annotation of the Drosophila melanogaster euchromatic genome: a systematic review.</title>
        <authorList>
            <person name="Misra S."/>
            <person name="Crosby M.A."/>
            <person name="Mungall C.J."/>
            <person name="Matthews B.B."/>
            <person name="Campbell K.S."/>
            <person name="Hradecky P."/>
            <person name="Huang Y."/>
            <person name="Kaminker J.S."/>
            <person name="Millburn G.H."/>
            <person name="Prochnik S.E."/>
            <person name="Smith C.D."/>
            <person name="Tupy J.L."/>
            <person name="Whitfield E.J."/>
            <person name="Bayraktaroglu L."/>
            <person name="Berman B.P."/>
            <person name="Bettencourt B.R."/>
            <person name="Celniker S.E."/>
            <person name="de Grey A.D.N.J."/>
            <person name="Drysdale R.A."/>
            <person name="Harris N.L."/>
            <person name="Richter J."/>
            <person name="Russo S."/>
            <person name="Schroeder A.J."/>
            <person name="Shu S.Q."/>
            <person name="Stapleton M."/>
            <person name="Yamada C."/>
            <person name="Ashburner M."/>
            <person name="Gelbart W.M."/>
            <person name="Rubin G.M."/>
            <person name="Lewis S.E."/>
        </authorList>
    </citation>
    <scope>GENOME REANNOTATION</scope>
    <source>
        <strain evidence="14">Berkeley</strain>
    </source>
</reference>
<reference evidence="11" key="5">
    <citation type="journal article" date="2002" name="Genome Biol.">
        <title>A Drosophila full-length cDNA resource.</title>
        <authorList>
            <person name="Stapleton M."/>
            <person name="Carlson J.W."/>
            <person name="Brokstein P."/>
            <person name="Yu C."/>
            <person name="Champe M."/>
            <person name="George R.A."/>
            <person name="Guarin H."/>
            <person name="Kronmiller B."/>
            <person name="Pacleb J.M."/>
            <person name="Park S."/>
            <person name="Wan K.H."/>
            <person name="Rubin G.M."/>
            <person name="Celniker S.E."/>
        </authorList>
    </citation>
    <scope>NUCLEOTIDE SEQUENCE [LARGE SCALE MRNA]</scope>
</reference>
<reference evidence="9" key="6">
    <citation type="journal article" date="2008" name="Dev. Biol.">
        <title>The 11-aminoacid long Tarsal-less peptides trigger a cell signal in Drosophila leg development.</title>
        <authorList>
            <person name="Pueyo J.I."/>
            <person name="Couso J.P."/>
        </authorList>
    </citation>
    <scope>FUNCTION</scope>
    <scope>DEVELOPMENTAL STAGE</scope>
</reference>
<reference evidence="9" key="7">
    <citation type="journal article" date="2010" name="Science">
        <title>Small peptides switch the transcriptional activity of Shavenbaby during Drosophila embryogenesis.</title>
        <authorList>
            <person name="Kondo T."/>
            <person name="Plaza S."/>
            <person name="Zanet J."/>
            <person name="Benrabah E."/>
            <person name="Valenti P."/>
            <person name="Hashimoto Y."/>
            <person name="Kobayashi S."/>
            <person name="Payre F."/>
            <person name="Kageyama Y."/>
        </authorList>
    </citation>
    <scope>FUNCTION</scope>
</reference>
<reference evidence="9" key="8">
    <citation type="journal article" date="2011" name="Dev. Biol.">
        <title>Tarsal-less peptides control Notch signalling through the Shavenbaby transcription factor.</title>
        <authorList>
            <person name="Pueyo J.I."/>
            <person name="Couso J.P."/>
        </authorList>
    </citation>
    <scope>FUNCTION</scope>
</reference>
<reference evidence="9" key="9">
    <citation type="journal article" date="2011" name="J. Biomed. Sci.">
        <title>Identification of 11-amino acid peptides that disrupt Notch-mediated processes in Drosophila.</title>
        <authorList>
            <person name="Pi H."/>
            <person name="Huang Y.C."/>
            <person name="Chen I.C."/>
            <person name="Lin C.D."/>
            <person name="Yeh H.F."/>
            <person name="Pai L.M."/>
        </authorList>
    </citation>
    <scope>FUNCTION</scope>
    <scope>DEVELOPMENTAL STAGE</scope>
</reference>
<reference evidence="9" key="10">
    <citation type="journal article" date="2014" name="Nat. Cell Biol.">
        <title>Pri peptides are mediators of ecdysone for the temporal control of development.</title>
        <authorList>
            <person name="Chanut-Delalande H."/>
            <person name="Hashimoto Y."/>
            <person name="Pelissier-Monier A."/>
            <person name="Spokony R."/>
            <person name="Dib A."/>
            <person name="Kondo T."/>
            <person name="Bohere J."/>
            <person name="Niimi K."/>
            <person name="Latapie Y."/>
            <person name="Inagaki S."/>
            <person name="Dubois L."/>
            <person name="Valenti P."/>
            <person name="Polesello C."/>
            <person name="Kobayashi S."/>
            <person name="Moussian B."/>
            <person name="White K.P."/>
            <person name="Plaza S."/>
            <person name="Kageyama Y."/>
            <person name="Payre F."/>
        </authorList>
    </citation>
    <scope>FUNCTION</scope>
    <scope>DEVELOPMENTAL STAGE</scope>
    <scope>INDUCTION BY ECDYSONE</scope>
</reference>
<reference evidence="9" key="11">
    <citation type="journal article" date="2015" name="Science">
        <title>Pri sORF peptides induce selective proteasome-mediated protein processing.</title>
        <authorList>
            <person name="Zanet J."/>
            <person name="Benrabah E."/>
            <person name="Li T."/>
            <person name="Pelissier-Monier A."/>
            <person name="Chanut-Delalande H."/>
            <person name="Ronsin B."/>
            <person name="Bellen H.J."/>
            <person name="Payre F."/>
            <person name="Plaza S."/>
        </authorList>
    </citation>
    <scope>FUNCTION</scope>
    <scope>SUBCELLULAR LOCATION</scope>
</reference>
<accession>A3RLR0</accession>
<dbReference type="EMBL" id="AB300657">
    <property type="protein sequence ID" value="BAF56587.1"/>
    <property type="molecule type" value="mRNA"/>
</dbReference>
<dbReference type="EMBL" id="EF427619">
    <property type="protein sequence ID" value="ABO09843.1"/>
    <property type="molecule type" value="mRNA"/>
</dbReference>
<dbReference type="EMBL" id="AE014297">
    <property type="protein sequence ID" value="ACL83510.1"/>
    <property type="molecule type" value="Genomic_DNA"/>
</dbReference>
<dbReference type="EMBL" id="AY070879">
    <property type="protein sequence ID" value="AFA55187.1"/>
    <property type="molecule type" value="mRNA"/>
</dbReference>
<dbReference type="RefSeq" id="NP_001138052.1">
    <property type="nucleotide sequence ID" value="NM_001144580.2"/>
</dbReference>
<dbReference type="EnsemblMetazoa" id="FBtr0299999">
    <property type="protein sequence ID" value="FBpp0289276"/>
    <property type="gene ID" value="FBgn0259732"/>
</dbReference>
<dbReference type="GeneID" id="7354378"/>
<dbReference type="KEGG" id="dme:Dmel_CG42386"/>
<dbReference type="AGR" id="FB:FBgn0259732"/>
<dbReference type="CTD" id="7354378"/>
<dbReference type="FlyBase" id="FBgn0259732">
    <property type="gene designation" value="tal-3A"/>
</dbReference>
<dbReference type="VEuPathDB" id="VectorBase:FBgn0259732"/>
<dbReference type="InParanoid" id="A3RLR0"/>
<dbReference type="BioGRID-ORCS" id="7354378">
    <property type="hits" value="0 hits in 1 CRISPR screen"/>
</dbReference>
<dbReference type="ChiTaRS" id="tal-3A">
    <property type="organism name" value="fly"/>
</dbReference>
<dbReference type="GenomeRNAi" id="7354378"/>
<dbReference type="PRO" id="PR:A3RLR0"/>
<dbReference type="Proteomes" id="UP000000803">
    <property type="component" value="Chromosome 3R"/>
</dbReference>
<dbReference type="Bgee" id="FBgn0259732">
    <property type="expression patterns" value="Expressed in saliva-secreting gland and 26 other cell types or tissues"/>
</dbReference>
<dbReference type="GO" id="GO:0005737">
    <property type="term" value="C:cytoplasm"/>
    <property type="evidence" value="ECO:0007669"/>
    <property type="project" value="UniProtKB-SubCell"/>
</dbReference>
<dbReference type="GO" id="GO:0005634">
    <property type="term" value="C:nucleus"/>
    <property type="evidence" value="ECO:0007669"/>
    <property type="project" value="UniProtKB-SubCell"/>
</dbReference>
<dbReference type="GO" id="GO:0007015">
    <property type="term" value="P:actin filament organization"/>
    <property type="evidence" value="ECO:0000316"/>
    <property type="project" value="FlyBase"/>
</dbReference>
<dbReference type="GO" id="GO:0002009">
    <property type="term" value="P:morphogenesis of an epithelium"/>
    <property type="evidence" value="ECO:0000316"/>
    <property type="project" value="FlyBase"/>
</dbReference>
<proteinExistence type="evidence at transcript level"/>
<feature type="chain" id="PRO_0000435527" description="Peptide tarsal-less 3A">
    <location>
        <begin position="1"/>
        <end position="11"/>
    </location>
</feature>
<organism>
    <name type="scientific">Drosophila melanogaster</name>
    <name type="common">Fruit fly</name>
    <dbReference type="NCBI Taxonomy" id="7227"/>
    <lineage>
        <taxon>Eukaryota</taxon>
        <taxon>Metazoa</taxon>
        <taxon>Ecdysozoa</taxon>
        <taxon>Arthropoda</taxon>
        <taxon>Hexapoda</taxon>
        <taxon>Insecta</taxon>
        <taxon>Pterygota</taxon>
        <taxon>Neoptera</taxon>
        <taxon>Endopterygota</taxon>
        <taxon>Diptera</taxon>
        <taxon>Brachycera</taxon>
        <taxon>Muscomorpha</taxon>
        <taxon>Ephydroidea</taxon>
        <taxon>Drosophilidae</taxon>
        <taxon>Drosophila</taxon>
        <taxon>Sophophora</taxon>
    </lineage>
</organism>
<sequence>MSHDLDPTGTY</sequence>
<evidence type="ECO:0000269" key="1">
    <source>
    </source>
</evidence>
<evidence type="ECO:0000269" key="2">
    <source>
    </source>
</evidence>
<evidence type="ECO:0000269" key="3">
    <source>
    </source>
</evidence>
<evidence type="ECO:0000269" key="4">
    <source>
    </source>
</evidence>
<evidence type="ECO:0000269" key="5">
    <source>
    </source>
</evidence>
<evidence type="ECO:0000269" key="6">
    <source>
    </source>
</evidence>
<evidence type="ECO:0000269" key="7">
    <source>
    </source>
</evidence>
<evidence type="ECO:0000269" key="8">
    <source>
    </source>
</evidence>
<evidence type="ECO:0000305" key="9"/>
<evidence type="ECO:0000312" key="10">
    <source>
        <dbReference type="EMBL" id="ABO09843.1"/>
    </source>
</evidence>
<evidence type="ECO:0000312" key="11">
    <source>
        <dbReference type="EMBL" id="AFA55187.1"/>
    </source>
</evidence>
<evidence type="ECO:0000312" key="12">
    <source>
        <dbReference type="EMBL" id="BAF56587.1"/>
    </source>
</evidence>
<evidence type="ECO:0000312" key="13">
    <source>
        <dbReference type="FlyBase" id="FBgn0259732"/>
    </source>
</evidence>
<evidence type="ECO:0000312" key="14">
    <source>
        <dbReference type="Proteomes" id="UP000000803"/>
    </source>
</evidence>
<name>TAL3A_DROME</name>
<keyword id="KW-0963">Cytoplasm</keyword>
<keyword id="KW-0217">Developmental protein</keyword>
<keyword id="KW-0539">Nucleus</keyword>
<keyword id="KW-1185">Reference proteome</keyword>
<gene>
    <name evidence="13" type="primary">tal-3A</name>
    <name evidence="12" type="synonym">pri</name>
    <name evidence="13" type="synonym">tal</name>
    <name evidence="13" type="ORF">CG42386</name>
</gene>